<evidence type="ECO:0000255" key="1">
    <source>
        <dbReference type="HAMAP-Rule" id="MF_00480"/>
    </source>
</evidence>
<evidence type="ECO:0000305" key="2"/>
<organism>
    <name type="scientific">Saccharolobus solfataricus (strain ATCC 35092 / DSM 1617 / JCM 11322 / P2)</name>
    <name type="common">Sulfolobus solfataricus</name>
    <dbReference type="NCBI Taxonomy" id="273057"/>
    <lineage>
        <taxon>Archaea</taxon>
        <taxon>Thermoproteota</taxon>
        <taxon>Thermoprotei</taxon>
        <taxon>Sulfolobales</taxon>
        <taxon>Sulfolobaceae</taxon>
        <taxon>Saccharolobus</taxon>
    </lineage>
</organism>
<sequence length="193" mass="21998">MSLENLQLDIKVFGKWDTKVEIRDPSLKKYISLMPVYLPHTGGRHEHRRFGKAKVPIVERLINQIMRPGRNKGKKHLAYNIVKLAFDIIYLKTGQNPIQVLVRAIENSAPREEVTRIMYGGIVYYVAVDVSPQRRIDLALRHIATGAKDASFNNPKPIEEVLAEEIIAAANNDSKSFAIKRKEEIERIALSSR</sequence>
<protein>
    <recommendedName>
        <fullName evidence="1">Small ribosomal subunit protein uS7</fullName>
    </recommendedName>
    <alternativeName>
        <fullName evidence="2">30S ribosomal protein S7</fullName>
    </alternativeName>
</protein>
<keyword id="KW-0002">3D-structure</keyword>
<keyword id="KW-1185">Reference proteome</keyword>
<keyword id="KW-0687">Ribonucleoprotein</keyword>
<keyword id="KW-0689">Ribosomal protein</keyword>
<keyword id="KW-0694">RNA-binding</keyword>
<keyword id="KW-0699">rRNA-binding</keyword>
<dbReference type="EMBL" id="X76767">
    <property type="protein sequence ID" value="CAA54161.1"/>
    <property type="molecule type" value="Genomic_DNA"/>
</dbReference>
<dbReference type="EMBL" id="AE006641">
    <property type="protein sequence ID" value="AAK40560.1"/>
    <property type="molecule type" value="Genomic_DNA"/>
</dbReference>
<dbReference type="EMBL" id="X70701">
    <property type="protein sequence ID" value="CAA50032.1"/>
    <property type="molecule type" value="Genomic_DNA"/>
</dbReference>
<dbReference type="PIR" id="A90163">
    <property type="entry name" value="A90163"/>
</dbReference>
<dbReference type="PIR" id="S33718">
    <property type="entry name" value="S33718"/>
</dbReference>
<dbReference type="PIR" id="T11746">
    <property type="entry name" value="T11746"/>
</dbReference>
<dbReference type="RefSeq" id="WP_009990466.1">
    <property type="nucleotide sequence ID" value="NC_002754.1"/>
</dbReference>
<dbReference type="PDB" id="9FHL">
    <property type="method" value="EM"/>
    <property type="resolution" value="2.50 A"/>
    <property type="chains" value="H=1-193"/>
</dbReference>
<dbReference type="PDB" id="9FRA">
    <property type="method" value="EM"/>
    <property type="resolution" value="2.80 A"/>
    <property type="chains" value="H=1-193"/>
</dbReference>
<dbReference type="PDB" id="9FRK">
    <property type="method" value="EM"/>
    <property type="resolution" value="3.00 A"/>
    <property type="chains" value="H=1-193"/>
</dbReference>
<dbReference type="PDB" id="9FRL">
    <property type="method" value="EM"/>
    <property type="resolution" value="2.97 A"/>
    <property type="chains" value="H=1-193"/>
</dbReference>
<dbReference type="PDB" id="9FS6">
    <property type="method" value="EM"/>
    <property type="resolution" value="2.90 A"/>
    <property type="chains" value="H=1-193"/>
</dbReference>
<dbReference type="PDB" id="9FS8">
    <property type="method" value="EM"/>
    <property type="resolution" value="3.70 A"/>
    <property type="chains" value="H=1-193"/>
</dbReference>
<dbReference type="PDB" id="9FSF">
    <property type="method" value="EM"/>
    <property type="resolution" value="2.80 A"/>
    <property type="chains" value="H=1-193"/>
</dbReference>
<dbReference type="PDB" id="9FY0">
    <property type="method" value="EM"/>
    <property type="resolution" value="2.90 A"/>
    <property type="chains" value="H=1-193"/>
</dbReference>
<dbReference type="PDBsum" id="9FHL"/>
<dbReference type="PDBsum" id="9FRA"/>
<dbReference type="PDBsum" id="9FRK"/>
<dbReference type="PDBsum" id="9FRL"/>
<dbReference type="PDBsum" id="9FS6"/>
<dbReference type="PDBsum" id="9FS8"/>
<dbReference type="PDBsum" id="9FSF"/>
<dbReference type="PDBsum" id="9FY0"/>
<dbReference type="EMDB" id="EMD-50445"/>
<dbReference type="EMDB" id="EMD-50709"/>
<dbReference type="EMDB" id="EMD-50716"/>
<dbReference type="EMDB" id="EMD-50717"/>
<dbReference type="EMDB" id="EMD-50724"/>
<dbReference type="EMDB" id="EMD-50725"/>
<dbReference type="EMDB" id="EMD-50727"/>
<dbReference type="EMDB" id="EMD-50854"/>
<dbReference type="SMR" id="P35026"/>
<dbReference type="FunCoup" id="P35026">
    <property type="interactions" value="260"/>
</dbReference>
<dbReference type="STRING" id="273057.SSO0217"/>
<dbReference type="PaxDb" id="273057-SSO0217"/>
<dbReference type="EnsemblBacteria" id="AAK40560">
    <property type="protein sequence ID" value="AAK40560"/>
    <property type="gene ID" value="SSO0217"/>
</dbReference>
<dbReference type="KEGG" id="sso:SSO0217"/>
<dbReference type="PATRIC" id="fig|273057.12.peg.215"/>
<dbReference type="eggNOG" id="arCOG04254">
    <property type="taxonomic scope" value="Archaea"/>
</dbReference>
<dbReference type="HOGENOM" id="CLU_063975_0_0_2"/>
<dbReference type="InParanoid" id="P35026"/>
<dbReference type="PhylomeDB" id="P35026"/>
<dbReference type="Proteomes" id="UP000001974">
    <property type="component" value="Chromosome"/>
</dbReference>
<dbReference type="GO" id="GO:0022627">
    <property type="term" value="C:cytosolic small ribosomal subunit"/>
    <property type="evidence" value="ECO:0000318"/>
    <property type="project" value="GO_Central"/>
</dbReference>
<dbReference type="GO" id="GO:0005840">
    <property type="term" value="C:ribosome"/>
    <property type="evidence" value="ECO:0000318"/>
    <property type="project" value="GO_Central"/>
</dbReference>
<dbReference type="GO" id="GO:0003729">
    <property type="term" value="F:mRNA binding"/>
    <property type="evidence" value="ECO:0000318"/>
    <property type="project" value="GO_Central"/>
</dbReference>
<dbReference type="GO" id="GO:0019843">
    <property type="term" value="F:rRNA binding"/>
    <property type="evidence" value="ECO:0000318"/>
    <property type="project" value="GO_Central"/>
</dbReference>
<dbReference type="GO" id="GO:0003735">
    <property type="term" value="F:structural constituent of ribosome"/>
    <property type="evidence" value="ECO:0000318"/>
    <property type="project" value="GO_Central"/>
</dbReference>
<dbReference type="GO" id="GO:0000028">
    <property type="term" value="P:ribosomal small subunit assembly"/>
    <property type="evidence" value="ECO:0000318"/>
    <property type="project" value="GO_Central"/>
</dbReference>
<dbReference type="GO" id="GO:0006412">
    <property type="term" value="P:translation"/>
    <property type="evidence" value="ECO:0000318"/>
    <property type="project" value="GO_Central"/>
</dbReference>
<dbReference type="CDD" id="cd14867">
    <property type="entry name" value="uS7_Eukaryote"/>
    <property type="match status" value="1"/>
</dbReference>
<dbReference type="FunFam" id="1.10.455.10:FF:000011">
    <property type="entry name" value="30S ribosomal protein S7"/>
    <property type="match status" value="1"/>
</dbReference>
<dbReference type="Gene3D" id="1.10.455.10">
    <property type="entry name" value="Ribosomal protein S7 domain"/>
    <property type="match status" value="1"/>
</dbReference>
<dbReference type="HAMAP" id="MF_00480_A">
    <property type="entry name" value="Ribosomal_uS7_A"/>
    <property type="match status" value="1"/>
</dbReference>
<dbReference type="InterPro" id="IPR000235">
    <property type="entry name" value="Ribosomal_uS7"/>
</dbReference>
<dbReference type="InterPro" id="IPR026018">
    <property type="entry name" value="Ribosomal_uS7_arc"/>
</dbReference>
<dbReference type="InterPro" id="IPR020606">
    <property type="entry name" value="Ribosomal_uS7_CS"/>
</dbReference>
<dbReference type="InterPro" id="IPR023798">
    <property type="entry name" value="Ribosomal_uS7_dom"/>
</dbReference>
<dbReference type="InterPro" id="IPR036823">
    <property type="entry name" value="Ribosomal_uS7_dom_sf"/>
</dbReference>
<dbReference type="InterPro" id="IPR005716">
    <property type="entry name" value="Ribosomal_uS7_euk/arc"/>
</dbReference>
<dbReference type="NCBIfam" id="NF003106">
    <property type="entry name" value="PRK04027.1"/>
    <property type="match status" value="1"/>
</dbReference>
<dbReference type="NCBIfam" id="TIGR01028">
    <property type="entry name" value="uS7_euk_arch"/>
    <property type="match status" value="1"/>
</dbReference>
<dbReference type="PANTHER" id="PTHR11205">
    <property type="entry name" value="RIBOSOMAL PROTEIN S7"/>
    <property type="match status" value="1"/>
</dbReference>
<dbReference type="Pfam" id="PF00177">
    <property type="entry name" value="Ribosomal_S7"/>
    <property type="match status" value="1"/>
</dbReference>
<dbReference type="PIRSF" id="PIRSF002122">
    <property type="entry name" value="RPS7p_RPS7a_RPS5e_RPS7o"/>
    <property type="match status" value="1"/>
</dbReference>
<dbReference type="SUPFAM" id="SSF47973">
    <property type="entry name" value="Ribosomal protein S7"/>
    <property type="match status" value="1"/>
</dbReference>
<dbReference type="PROSITE" id="PS00052">
    <property type="entry name" value="RIBOSOMAL_S7"/>
    <property type="match status" value="1"/>
</dbReference>
<feature type="chain" id="PRO_0000124413" description="Small ribosomal subunit protein uS7">
    <location>
        <begin position="1"/>
        <end position="193"/>
    </location>
</feature>
<feature type="sequence variant" description="In strain: MT-4.">
    <original>G</original>
    <variation>S</variation>
    <location>
        <position position="14"/>
    </location>
</feature>
<feature type="sequence variant" description="In strain: MT-4.">
    <original>S</original>
    <variation>A</variation>
    <location>
        <position position="131"/>
    </location>
</feature>
<feature type="sequence variant" description="In strain: MT-4.">
    <original>A</original>
    <variation>S</variation>
    <location>
        <position position="150"/>
    </location>
</feature>
<feature type="sequence variant" description="In strain: MT-4.">
    <original>S</original>
    <variation>P</variation>
    <location>
        <position position="174"/>
    </location>
</feature>
<comment type="function">
    <text evidence="1">One of the primary rRNA binding proteins, it binds directly to 16S rRNA where it nucleates assembly of the head domain of the 30S subunit. Is located at the subunit interface close to the decoding center.</text>
</comment>
<comment type="subunit">
    <text>Part of the 30S ribosomal subunit.</text>
</comment>
<comment type="similarity">
    <text evidence="1">Belongs to the universal ribosomal protein uS7 family.</text>
</comment>
<accession>P35026</accession>
<proteinExistence type="evidence at protein level"/>
<reference key="1">
    <citation type="journal article" date="1994" name="Biochim. Biophys. Acta">
        <title>The nucleotide sequence of the gene coding for the elongation factor 1 alpha in Sulfolobus solfataricus. Homology of the product with related proteins.</title>
        <authorList>
            <person name="Arcari P."/>
            <person name="Gallo M."/>
            <person name="Ianniciello G."/>
            <person name="Dello Russo A."/>
            <person name="Bocchini V."/>
        </authorList>
    </citation>
    <scope>NUCLEOTIDE SEQUENCE [GENOMIC DNA]</scope>
    <source>
        <strain>DSM 5833 / MT-4</strain>
    </source>
</reference>
<reference key="2">
    <citation type="journal article" date="2001" name="Proc. Natl. Acad. Sci. U.S.A.">
        <title>The complete genome of the crenarchaeon Sulfolobus solfataricus P2.</title>
        <authorList>
            <person name="She Q."/>
            <person name="Singh R.K."/>
            <person name="Confalonieri F."/>
            <person name="Zivanovic Y."/>
            <person name="Allard G."/>
            <person name="Awayez M.J."/>
            <person name="Chan-Weiher C.C.-Y."/>
            <person name="Clausen I.G."/>
            <person name="Curtis B.A."/>
            <person name="De Moors A."/>
            <person name="Erauso G."/>
            <person name="Fletcher C."/>
            <person name="Gordon P.M.K."/>
            <person name="Heikamp-de Jong I."/>
            <person name="Jeffries A.C."/>
            <person name="Kozera C.J."/>
            <person name="Medina N."/>
            <person name="Peng X."/>
            <person name="Thi-Ngoc H.P."/>
            <person name="Redder P."/>
            <person name="Schenk M.E."/>
            <person name="Theriault C."/>
            <person name="Tolstrup N."/>
            <person name="Charlebois R.L."/>
            <person name="Doolittle W.F."/>
            <person name="Duguet M."/>
            <person name="Gaasterland T."/>
            <person name="Garrett R.A."/>
            <person name="Ragan M.A."/>
            <person name="Sensen C.W."/>
            <person name="Van der Oost J."/>
        </authorList>
    </citation>
    <scope>NUCLEOTIDE SEQUENCE [LARGE SCALE GENOMIC DNA]</scope>
    <source>
        <strain>ATCC 35092 / DSM 1617 / JCM 11322 / P2</strain>
    </source>
</reference>
<reference key="3">
    <citation type="journal article" date="1993" name="Nucleic Acids Res.">
        <title>Primary structure of the elongation factor 1 alpha in Sulfolobus solfataricus.</title>
        <authorList>
            <person name="Arcari P."/>
            <person name="Gallo M."/>
            <person name="Ianniciello G."/>
            <person name="Dello Russo A."/>
            <person name="Bocchini V."/>
        </authorList>
    </citation>
    <scope>NUCLEOTIDE SEQUENCE [GENOMIC DNA] OF 100-193</scope>
    <source>
        <strain>DSM 5833 / MT-4</strain>
    </source>
</reference>
<name>RS7_SACS2</name>
<gene>
    <name evidence="1" type="primary">rps7</name>
    <name evidence="1" type="synonym">rps7Ab</name>
    <name type="ordered locus">SSO0217</name>
</gene>